<feature type="chain" id="PRO_1000026648" description="Phosphatidylserine decarboxylase beta chain" evidence="1">
    <location>
        <begin position="1"/>
        <end position="182"/>
    </location>
</feature>
<feature type="chain" id="PRO_1000026649" description="Phosphatidylserine decarboxylase alpha chain" evidence="1">
    <location>
        <begin position="183"/>
        <end position="218"/>
    </location>
</feature>
<feature type="active site" description="Schiff-base intermediate with substrate; via pyruvic acid" evidence="1">
    <location>
        <position position="183"/>
    </location>
</feature>
<feature type="site" description="Cleavage (non-hydrolytic); by autocatalysis" evidence="1">
    <location>
        <begin position="182"/>
        <end position="183"/>
    </location>
</feature>
<feature type="modified residue" description="Pyruvic acid (Ser); by autocatalysis" evidence="1">
    <location>
        <position position="183"/>
    </location>
</feature>
<sequence length="218" mass="24131">MEKSGLVAKEGYPFMAIFIGVAAVSSALSWYGIVQFVLWVLAGWCIWFFRDPERHSDAPEDAVIAPADGRVVAIREMEKGPLTDEPVRMVSIFMNVFNVHVNRAPIAGTVTKISYHPGKFVNADLDKASIENERNVLLMESPAGVKMAFQQVAGLVARRIVCRINEGTVLQRGERFGLIRFGSRVDLFFPMDAEISVKLGEMTHSGVTQMGRLKGKES</sequence>
<organism>
    <name type="scientific">Magnetococcus marinus (strain ATCC BAA-1437 / JCM 17883 / MC-1)</name>
    <dbReference type="NCBI Taxonomy" id="156889"/>
    <lineage>
        <taxon>Bacteria</taxon>
        <taxon>Pseudomonadati</taxon>
        <taxon>Pseudomonadota</taxon>
        <taxon>Alphaproteobacteria</taxon>
        <taxon>Magnetococcales</taxon>
        <taxon>Magnetococcaceae</taxon>
        <taxon>Magnetococcus</taxon>
    </lineage>
</organism>
<accession>A0L627</accession>
<evidence type="ECO:0000255" key="1">
    <source>
        <dbReference type="HAMAP-Rule" id="MF_00664"/>
    </source>
</evidence>
<comment type="function">
    <text evidence="1">Catalyzes the formation of phosphatidylethanolamine (PtdEtn) from phosphatidylserine (PtdSer).</text>
</comment>
<comment type="catalytic activity">
    <reaction evidence="1">
        <text>a 1,2-diacyl-sn-glycero-3-phospho-L-serine + H(+) = a 1,2-diacyl-sn-glycero-3-phosphoethanolamine + CO2</text>
        <dbReference type="Rhea" id="RHEA:20828"/>
        <dbReference type="ChEBI" id="CHEBI:15378"/>
        <dbReference type="ChEBI" id="CHEBI:16526"/>
        <dbReference type="ChEBI" id="CHEBI:57262"/>
        <dbReference type="ChEBI" id="CHEBI:64612"/>
        <dbReference type="EC" id="4.1.1.65"/>
    </reaction>
</comment>
<comment type="cofactor">
    <cofactor evidence="1">
        <name>pyruvate</name>
        <dbReference type="ChEBI" id="CHEBI:15361"/>
    </cofactor>
    <text evidence="1">Binds 1 pyruvoyl group covalently per subunit.</text>
</comment>
<comment type="pathway">
    <text evidence="1">Phospholipid metabolism; phosphatidylethanolamine biosynthesis; phosphatidylethanolamine from CDP-diacylglycerol: step 2/2.</text>
</comment>
<comment type="subunit">
    <text evidence="1">Heterodimer of a large membrane-associated beta subunit and a small pyruvoyl-containing alpha subunit.</text>
</comment>
<comment type="subcellular location">
    <subcellularLocation>
        <location evidence="1">Cell membrane</location>
        <topology evidence="1">Peripheral membrane protein</topology>
    </subcellularLocation>
</comment>
<comment type="PTM">
    <text evidence="1">Is synthesized initially as an inactive proenzyme. Formation of the active enzyme involves a self-maturation process in which the active site pyruvoyl group is generated from an internal serine residue via an autocatalytic post-translational modification. Two non-identical subunits are generated from the proenzyme in this reaction, and the pyruvate is formed at the N-terminus of the alpha chain, which is derived from the carboxyl end of the proenzyme. The post-translation cleavage follows an unusual pathway, termed non-hydrolytic serinolysis, in which the side chain hydroxyl group of the serine supplies its oxygen atom to form the C-terminus of the beta chain, while the remainder of the serine residue undergoes an oxidative deamination to produce ammonia and the pyruvoyl prosthetic group on the alpha chain.</text>
</comment>
<comment type="similarity">
    <text evidence="1">Belongs to the phosphatidylserine decarboxylase family. PSD-A subfamily.</text>
</comment>
<dbReference type="EC" id="4.1.1.65" evidence="1"/>
<dbReference type="EMBL" id="CP000471">
    <property type="protein sequence ID" value="ABK43420.1"/>
    <property type="molecule type" value="Genomic_DNA"/>
</dbReference>
<dbReference type="RefSeq" id="WP_011712577.1">
    <property type="nucleotide sequence ID" value="NC_008576.1"/>
</dbReference>
<dbReference type="STRING" id="156889.Mmc1_0901"/>
<dbReference type="KEGG" id="mgm:Mmc1_0901"/>
<dbReference type="eggNOG" id="COG0688">
    <property type="taxonomic scope" value="Bacteria"/>
</dbReference>
<dbReference type="HOGENOM" id="CLU_072492_0_0_5"/>
<dbReference type="OrthoDB" id="9790893at2"/>
<dbReference type="UniPathway" id="UPA00558">
    <property type="reaction ID" value="UER00616"/>
</dbReference>
<dbReference type="Proteomes" id="UP000002586">
    <property type="component" value="Chromosome"/>
</dbReference>
<dbReference type="GO" id="GO:0005886">
    <property type="term" value="C:plasma membrane"/>
    <property type="evidence" value="ECO:0007669"/>
    <property type="project" value="UniProtKB-SubCell"/>
</dbReference>
<dbReference type="GO" id="GO:0004609">
    <property type="term" value="F:phosphatidylserine decarboxylase activity"/>
    <property type="evidence" value="ECO:0007669"/>
    <property type="project" value="UniProtKB-UniRule"/>
</dbReference>
<dbReference type="GO" id="GO:0006646">
    <property type="term" value="P:phosphatidylethanolamine biosynthetic process"/>
    <property type="evidence" value="ECO:0007669"/>
    <property type="project" value="UniProtKB-UniRule"/>
</dbReference>
<dbReference type="HAMAP" id="MF_00664">
    <property type="entry name" value="PS_decarb_PSD_A"/>
    <property type="match status" value="1"/>
</dbReference>
<dbReference type="InterPro" id="IPR003817">
    <property type="entry name" value="PS_Dcarbxylase"/>
</dbReference>
<dbReference type="InterPro" id="IPR033175">
    <property type="entry name" value="PSD-A"/>
</dbReference>
<dbReference type="NCBIfam" id="NF003678">
    <property type="entry name" value="PRK05305.1-2"/>
    <property type="match status" value="1"/>
</dbReference>
<dbReference type="NCBIfam" id="NF003685">
    <property type="entry name" value="PRK05305.2-5"/>
    <property type="match status" value="1"/>
</dbReference>
<dbReference type="PANTHER" id="PTHR35809">
    <property type="entry name" value="ARCHAETIDYLSERINE DECARBOXYLASE PROENZYME-RELATED"/>
    <property type="match status" value="1"/>
</dbReference>
<dbReference type="PANTHER" id="PTHR35809:SF1">
    <property type="entry name" value="ARCHAETIDYLSERINE DECARBOXYLASE PROENZYME-RELATED"/>
    <property type="match status" value="1"/>
</dbReference>
<dbReference type="Pfam" id="PF02666">
    <property type="entry name" value="PS_Dcarbxylase"/>
    <property type="match status" value="1"/>
</dbReference>
<reference key="1">
    <citation type="journal article" date="2009" name="Appl. Environ. Microbiol.">
        <title>Complete genome sequence of the chemolithoautotrophic marine magnetotactic coccus strain MC-1.</title>
        <authorList>
            <person name="Schubbe S."/>
            <person name="Williams T.J."/>
            <person name="Xie G."/>
            <person name="Kiss H.E."/>
            <person name="Brettin T.S."/>
            <person name="Martinez D."/>
            <person name="Ross C.A."/>
            <person name="Schuler D."/>
            <person name="Cox B.L."/>
            <person name="Nealson K.H."/>
            <person name="Bazylinski D.A."/>
        </authorList>
    </citation>
    <scope>NUCLEOTIDE SEQUENCE [LARGE SCALE GENOMIC DNA]</scope>
    <source>
        <strain>ATCC BAA-1437 / JCM 17883 / MC-1</strain>
    </source>
</reference>
<keyword id="KW-1003">Cell membrane</keyword>
<keyword id="KW-0210">Decarboxylase</keyword>
<keyword id="KW-0444">Lipid biosynthesis</keyword>
<keyword id="KW-0443">Lipid metabolism</keyword>
<keyword id="KW-0456">Lyase</keyword>
<keyword id="KW-0472">Membrane</keyword>
<keyword id="KW-0594">Phospholipid biosynthesis</keyword>
<keyword id="KW-1208">Phospholipid metabolism</keyword>
<keyword id="KW-0670">Pyruvate</keyword>
<keyword id="KW-1185">Reference proteome</keyword>
<keyword id="KW-0865">Zymogen</keyword>
<protein>
    <recommendedName>
        <fullName evidence="1">Phosphatidylserine decarboxylase proenzyme</fullName>
        <ecNumber evidence="1">4.1.1.65</ecNumber>
    </recommendedName>
    <component>
        <recommendedName>
            <fullName evidence="1">Phosphatidylserine decarboxylase alpha chain</fullName>
        </recommendedName>
    </component>
    <component>
        <recommendedName>
            <fullName evidence="1">Phosphatidylserine decarboxylase beta chain</fullName>
        </recommendedName>
    </component>
</protein>
<name>PSD_MAGMM</name>
<gene>
    <name evidence="1" type="primary">psd</name>
    <name type="ordered locus">Mmc1_0901</name>
</gene>
<proteinExistence type="inferred from homology"/>